<protein>
    <recommendedName>
        <fullName>Cytochrome c oxidase subunit 6A2, mitochondrial</fullName>
    </recommendedName>
    <alternativeName>
        <fullName>Cytochrome c oxidase polypeptide VIa-heart</fullName>
        <shortName>COXVIAH</shortName>
    </alternativeName>
</protein>
<feature type="chain" id="PRO_0000193445" description="Cytochrome c oxidase subunit 6A2, mitochondrial">
    <location>
        <begin position="1"/>
        <end position="20" status="greater than"/>
    </location>
</feature>
<feature type="region of interest" description="Disordered" evidence="4">
    <location>
        <begin position="1"/>
        <end position="20"/>
    </location>
</feature>
<feature type="non-terminal residue">
    <location>
        <position position="20"/>
    </location>
</feature>
<organism>
    <name type="scientific">Canis lupus familiaris</name>
    <name type="common">Dog</name>
    <name type="synonym">Canis familiaris</name>
    <dbReference type="NCBI Taxonomy" id="9615"/>
    <lineage>
        <taxon>Eukaryota</taxon>
        <taxon>Metazoa</taxon>
        <taxon>Chordata</taxon>
        <taxon>Craniata</taxon>
        <taxon>Vertebrata</taxon>
        <taxon>Euteleostomi</taxon>
        <taxon>Mammalia</taxon>
        <taxon>Eutheria</taxon>
        <taxon>Laurasiatheria</taxon>
        <taxon>Carnivora</taxon>
        <taxon>Caniformia</taxon>
        <taxon>Canidae</taxon>
        <taxon>Canis</taxon>
    </lineage>
</organism>
<evidence type="ECO:0000250" key="1">
    <source>
        <dbReference type="UniProtKB" id="P07471"/>
    </source>
</evidence>
<evidence type="ECO:0000250" key="2">
    <source>
        <dbReference type="UniProtKB" id="P32799"/>
    </source>
</evidence>
<evidence type="ECO:0000250" key="3">
    <source>
        <dbReference type="UniProtKB" id="P43023"/>
    </source>
</evidence>
<evidence type="ECO:0000256" key="4">
    <source>
        <dbReference type="SAM" id="MobiDB-lite"/>
    </source>
</evidence>
<evidence type="ECO:0000305" key="5"/>
<reference key="1">
    <citation type="journal article" date="1995" name="Comp. Biochem. Physiol.">
        <title>Species-specific expression of cytochrome c oxidase isozymes.</title>
        <authorList>
            <person name="Linder D."/>
            <person name="Freund R."/>
            <person name="Kadenbach B."/>
        </authorList>
    </citation>
    <scope>PROTEIN SEQUENCE</scope>
    <source>
        <tissue>Heart</tissue>
    </source>
</reference>
<dbReference type="FunCoup" id="P61900">
    <property type="interactions" value="136"/>
</dbReference>
<dbReference type="InParanoid" id="P61900"/>
<dbReference type="OrthoDB" id="9632725at2759"/>
<dbReference type="UniPathway" id="UPA00705"/>
<dbReference type="Proteomes" id="UP000002254">
    <property type="component" value="Unplaced"/>
</dbReference>
<dbReference type="Proteomes" id="UP000694429">
    <property type="component" value="Unplaced"/>
</dbReference>
<dbReference type="Proteomes" id="UP000694542">
    <property type="component" value="Unplaced"/>
</dbReference>
<dbReference type="Proteomes" id="UP000805418">
    <property type="component" value="Unplaced"/>
</dbReference>
<dbReference type="GO" id="GO:0005743">
    <property type="term" value="C:mitochondrial inner membrane"/>
    <property type="evidence" value="ECO:0007669"/>
    <property type="project" value="UniProtKB-SubCell"/>
</dbReference>
<dbReference type="GO" id="GO:0016491">
    <property type="term" value="F:oxidoreductase activity"/>
    <property type="evidence" value="ECO:0007669"/>
    <property type="project" value="UniProtKB-KW"/>
</dbReference>
<dbReference type="GO" id="GO:0006119">
    <property type="term" value="P:oxidative phosphorylation"/>
    <property type="evidence" value="ECO:0007669"/>
    <property type="project" value="UniProtKB-UniPathway"/>
</dbReference>
<accession>P61900</accession>
<accession>Q9TR31</accession>
<keyword id="KW-0903">Direct protein sequencing</keyword>
<keyword id="KW-0472">Membrane</keyword>
<keyword id="KW-0496">Mitochondrion</keyword>
<keyword id="KW-0999">Mitochondrion inner membrane</keyword>
<keyword id="KW-0560">Oxidoreductase</keyword>
<keyword id="KW-1185">Reference proteome</keyword>
<keyword id="KW-0812">Transmembrane</keyword>
<keyword id="KW-1133">Transmembrane helix</keyword>
<name>CX6A2_CANLF</name>
<comment type="function">
    <text evidence="2 3">Component of the cytochrome c oxidase, the last enzyme in the mitochondrial electron transport chain which drives oxidative phosphorylation. The respiratory chain contains 3 multisubunit complexes succinate dehydrogenase (complex II, CII), ubiquinol-cytochrome c oxidoreductase (cytochrome b-c1 complex, complex III, CIII) and cytochrome c oxidase (complex IV, CIV), that cooperate to transfer electrons derived from NADH and succinate to molecular oxygen, creating an electrochemical gradient over the inner membrane that drives transmembrane transport and the ATP synthase. Cytochrome c oxidase is the component of the respiratory chain that catalyzes the reduction of oxygen to water. Electrons originating from reduced cytochrome c in the intermembrane space (IMS) are transferred via the dinuclear copper A center (CU(A)) of subunit 2 and heme A of subunit 1 to the active site in subunit 1, a binuclear center (BNC) formed by heme A3 and copper B (CU(B)). The BNC reduces molecular oxygen to 2 water molecules unsing 4 electrons from cytochrome c in the IMS and 4 protons from the mitochondrial matrix. Plays a role in the assembly and stabilization of complex IV (By similarity).</text>
</comment>
<comment type="pathway">
    <text evidence="2">Energy metabolism; oxidative phosphorylation.</text>
</comment>
<comment type="subunit">
    <text evidence="1">Component of the cytochrome c oxidase (complex IV, CIV), a multisubunit enzyme composed of 14 subunits. The complex is composed of a catalytic core of 3 subunits MT-CO1, MT-CO2 and MT-CO3, encoded in the mitochondrial DNA, and 11 supernumerary subunits COX4I, COX5A, COX5B, COX6A, COX6B, COX6C, COX7A, COX7B, COX7C, COX8 and NDUFA4, which are encoded in the nuclear genome. The complex exists as a monomer or a dimer and forms supercomplexes (SCs) in the inner mitochondrial membrane with NADH-ubiquinone oxidoreductase (complex I, CI) and ubiquinol-cytochrome c oxidoreductase (cytochrome b-c1 complex, complex III, CIII), resulting in different assemblies (supercomplex SCI(1)III(2)IV(1) and megacomplex MCI(2)III(2)IV(2)).</text>
</comment>
<comment type="subcellular location">
    <subcellularLocation>
        <location evidence="1">Mitochondrion inner membrane</location>
        <topology evidence="1">Single-pass membrane protein</topology>
    </subcellularLocation>
</comment>
<comment type="tissue specificity">
    <text>Heart specific isoform.</text>
</comment>
<comment type="similarity">
    <text evidence="5">Belongs to the cytochrome c oxidase subunit 6A family.</text>
</comment>
<gene>
    <name type="primary">COX6A2</name>
</gene>
<proteinExistence type="evidence at protein level"/>
<sequence>ASGAKGDHGGAGASTXXLLT</sequence>